<keyword id="KW-0028">Amino-acid biosynthesis</keyword>
<keyword id="KW-0032">Aminotransferase</keyword>
<keyword id="KW-0963">Cytoplasm</keyword>
<keyword id="KW-0663">Pyridoxal phosphate</keyword>
<keyword id="KW-0664">Pyridoxine biosynthesis</keyword>
<keyword id="KW-1185">Reference proteome</keyword>
<keyword id="KW-0718">Serine biosynthesis</keyword>
<keyword id="KW-0808">Transferase</keyword>
<proteinExistence type="inferred from homology"/>
<gene>
    <name evidence="1" type="primary">serC</name>
    <name type="ordered locus">SDY_2354</name>
</gene>
<dbReference type="EC" id="2.6.1.52" evidence="1"/>
<dbReference type="EMBL" id="CP000034">
    <property type="protein sequence ID" value="ABB62431.1"/>
    <property type="molecule type" value="Genomic_DNA"/>
</dbReference>
<dbReference type="RefSeq" id="WP_000057128.1">
    <property type="nucleotide sequence ID" value="NC_007606.1"/>
</dbReference>
<dbReference type="RefSeq" id="YP_403922.1">
    <property type="nucleotide sequence ID" value="NC_007606.1"/>
</dbReference>
<dbReference type="SMR" id="Q32E24"/>
<dbReference type="STRING" id="300267.SDY_2354"/>
<dbReference type="EnsemblBacteria" id="ABB62431">
    <property type="protein sequence ID" value="ABB62431"/>
    <property type="gene ID" value="SDY_2354"/>
</dbReference>
<dbReference type="KEGG" id="sdy:SDY_2354"/>
<dbReference type="PATRIC" id="fig|300267.13.peg.2839"/>
<dbReference type="HOGENOM" id="CLU_034866_0_2_6"/>
<dbReference type="UniPathway" id="UPA00135">
    <property type="reaction ID" value="UER00197"/>
</dbReference>
<dbReference type="UniPathway" id="UPA00244">
    <property type="reaction ID" value="UER00311"/>
</dbReference>
<dbReference type="Proteomes" id="UP000002716">
    <property type="component" value="Chromosome"/>
</dbReference>
<dbReference type="GO" id="GO:0005737">
    <property type="term" value="C:cytoplasm"/>
    <property type="evidence" value="ECO:0007669"/>
    <property type="project" value="UniProtKB-SubCell"/>
</dbReference>
<dbReference type="GO" id="GO:0004648">
    <property type="term" value="F:O-phospho-L-serine:2-oxoglutarate aminotransferase activity"/>
    <property type="evidence" value="ECO:0007669"/>
    <property type="project" value="UniProtKB-UniRule"/>
</dbReference>
<dbReference type="GO" id="GO:0030170">
    <property type="term" value="F:pyridoxal phosphate binding"/>
    <property type="evidence" value="ECO:0007669"/>
    <property type="project" value="UniProtKB-UniRule"/>
</dbReference>
<dbReference type="GO" id="GO:0006564">
    <property type="term" value="P:L-serine biosynthetic process"/>
    <property type="evidence" value="ECO:0007669"/>
    <property type="project" value="UniProtKB-UniRule"/>
</dbReference>
<dbReference type="GO" id="GO:0008615">
    <property type="term" value="P:pyridoxine biosynthetic process"/>
    <property type="evidence" value="ECO:0007669"/>
    <property type="project" value="UniProtKB-UniRule"/>
</dbReference>
<dbReference type="CDD" id="cd00611">
    <property type="entry name" value="PSAT_like"/>
    <property type="match status" value="1"/>
</dbReference>
<dbReference type="FunFam" id="3.40.640.10:FF:000010">
    <property type="entry name" value="Phosphoserine aminotransferase"/>
    <property type="match status" value="1"/>
</dbReference>
<dbReference type="FunFam" id="3.90.1150.10:FF:000006">
    <property type="entry name" value="Phosphoserine aminotransferase"/>
    <property type="match status" value="1"/>
</dbReference>
<dbReference type="Gene3D" id="3.90.1150.10">
    <property type="entry name" value="Aspartate Aminotransferase, domain 1"/>
    <property type="match status" value="1"/>
</dbReference>
<dbReference type="Gene3D" id="3.40.640.10">
    <property type="entry name" value="Type I PLP-dependent aspartate aminotransferase-like (Major domain)"/>
    <property type="match status" value="1"/>
</dbReference>
<dbReference type="HAMAP" id="MF_00160">
    <property type="entry name" value="SerC_aminotrans_5"/>
    <property type="match status" value="1"/>
</dbReference>
<dbReference type="InterPro" id="IPR000192">
    <property type="entry name" value="Aminotrans_V_dom"/>
</dbReference>
<dbReference type="InterPro" id="IPR020578">
    <property type="entry name" value="Aminotrans_V_PyrdxlP_BS"/>
</dbReference>
<dbReference type="InterPro" id="IPR022278">
    <property type="entry name" value="Pser_aminoTfrase"/>
</dbReference>
<dbReference type="InterPro" id="IPR015424">
    <property type="entry name" value="PyrdxlP-dep_Trfase"/>
</dbReference>
<dbReference type="InterPro" id="IPR015421">
    <property type="entry name" value="PyrdxlP-dep_Trfase_major"/>
</dbReference>
<dbReference type="InterPro" id="IPR015422">
    <property type="entry name" value="PyrdxlP-dep_Trfase_small"/>
</dbReference>
<dbReference type="NCBIfam" id="NF003764">
    <property type="entry name" value="PRK05355.1"/>
    <property type="match status" value="1"/>
</dbReference>
<dbReference type="NCBIfam" id="TIGR01364">
    <property type="entry name" value="serC_1"/>
    <property type="match status" value="1"/>
</dbReference>
<dbReference type="PANTHER" id="PTHR43247">
    <property type="entry name" value="PHOSPHOSERINE AMINOTRANSFERASE"/>
    <property type="match status" value="1"/>
</dbReference>
<dbReference type="PANTHER" id="PTHR43247:SF1">
    <property type="entry name" value="PHOSPHOSERINE AMINOTRANSFERASE"/>
    <property type="match status" value="1"/>
</dbReference>
<dbReference type="Pfam" id="PF00266">
    <property type="entry name" value="Aminotran_5"/>
    <property type="match status" value="1"/>
</dbReference>
<dbReference type="PIRSF" id="PIRSF000525">
    <property type="entry name" value="SerC"/>
    <property type="match status" value="1"/>
</dbReference>
<dbReference type="SUPFAM" id="SSF53383">
    <property type="entry name" value="PLP-dependent transferases"/>
    <property type="match status" value="1"/>
</dbReference>
<dbReference type="PROSITE" id="PS00595">
    <property type="entry name" value="AA_TRANSFER_CLASS_5"/>
    <property type="match status" value="1"/>
</dbReference>
<protein>
    <recommendedName>
        <fullName evidence="1">Phosphoserine aminotransferase</fullName>
        <ecNumber evidence="1">2.6.1.52</ecNumber>
    </recommendedName>
    <alternativeName>
        <fullName evidence="1">Phosphohydroxythreonine aminotransferase</fullName>
        <shortName evidence="1">PSAT</shortName>
    </alternativeName>
</protein>
<comment type="function">
    <text evidence="1">Catalyzes the reversible conversion of 3-phosphohydroxypyruvate to phosphoserine and of 3-hydroxy-2-oxo-4-phosphonooxybutanoate to phosphohydroxythreonine.</text>
</comment>
<comment type="catalytic activity">
    <reaction evidence="1">
        <text>O-phospho-L-serine + 2-oxoglutarate = 3-phosphooxypyruvate + L-glutamate</text>
        <dbReference type="Rhea" id="RHEA:14329"/>
        <dbReference type="ChEBI" id="CHEBI:16810"/>
        <dbReference type="ChEBI" id="CHEBI:18110"/>
        <dbReference type="ChEBI" id="CHEBI:29985"/>
        <dbReference type="ChEBI" id="CHEBI:57524"/>
        <dbReference type="EC" id="2.6.1.52"/>
    </reaction>
</comment>
<comment type="catalytic activity">
    <reaction evidence="1">
        <text>4-(phosphooxy)-L-threonine + 2-oxoglutarate = (R)-3-hydroxy-2-oxo-4-phosphooxybutanoate + L-glutamate</text>
        <dbReference type="Rhea" id="RHEA:16573"/>
        <dbReference type="ChEBI" id="CHEBI:16810"/>
        <dbReference type="ChEBI" id="CHEBI:29985"/>
        <dbReference type="ChEBI" id="CHEBI:58452"/>
        <dbReference type="ChEBI" id="CHEBI:58538"/>
        <dbReference type="EC" id="2.6.1.52"/>
    </reaction>
</comment>
<comment type="cofactor">
    <cofactor evidence="1">
        <name>pyridoxal 5'-phosphate</name>
        <dbReference type="ChEBI" id="CHEBI:597326"/>
    </cofactor>
    <text evidence="1">Binds 1 pyridoxal phosphate per subunit.</text>
</comment>
<comment type="pathway">
    <text evidence="1">Amino-acid biosynthesis; L-serine biosynthesis; L-serine from 3-phospho-D-glycerate: step 2/3.</text>
</comment>
<comment type="pathway">
    <text evidence="1">Cofactor biosynthesis; pyridoxine 5'-phosphate biosynthesis; pyridoxine 5'-phosphate from D-erythrose 4-phosphate: step 3/5.</text>
</comment>
<comment type="subunit">
    <text evidence="1">Homodimer.</text>
</comment>
<comment type="subcellular location">
    <subcellularLocation>
        <location evidence="1">Cytoplasm</location>
    </subcellularLocation>
</comment>
<comment type="similarity">
    <text evidence="1">Belongs to the class-V pyridoxal-phosphate-dependent aminotransferase family. SerC subfamily.</text>
</comment>
<sequence>MAQIFNFSSGPAMLPAEVLKQAQQELRDWNGLGTSVMEVSHRGKEFIQVAEEAEKDFRDLLHVPSNYKVLFCHGGGRGQFAAVPLNILGDKTTADYVDAGYWAASAIKEAKKYCTPNVFDAKVTVDGLRAVKPMREWQLSDNAAYMHYCPNETIDGIAIDETPDFGKDVVVAADFSSTILSRPIDVSRYGVIYAGAQKNIGPAGLTIVIVREDLLGKANIACPSILDYSILNDNGSMFNTPPTFAWYLSGLVFKWLKANGGVAEMDKINQQKAELLYGVIDNSDFYRNDVAKANRSRMNVPFQLADSALDKLFLEESFAAGLHALKGHRVVGGMRASIYNAMPLEGVKALTDFMVEFERRHG</sequence>
<name>SERC_SHIDS</name>
<organism>
    <name type="scientific">Shigella dysenteriae serotype 1 (strain Sd197)</name>
    <dbReference type="NCBI Taxonomy" id="300267"/>
    <lineage>
        <taxon>Bacteria</taxon>
        <taxon>Pseudomonadati</taxon>
        <taxon>Pseudomonadota</taxon>
        <taxon>Gammaproteobacteria</taxon>
        <taxon>Enterobacterales</taxon>
        <taxon>Enterobacteriaceae</taxon>
        <taxon>Shigella</taxon>
    </lineage>
</organism>
<evidence type="ECO:0000255" key="1">
    <source>
        <dbReference type="HAMAP-Rule" id="MF_00160"/>
    </source>
</evidence>
<feature type="chain" id="PRO_1000203580" description="Phosphoserine aminotransferase">
    <location>
        <begin position="1"/>
        <end position="362"/>
    </location>
</feature>
<feature type="binding site" evidence="1">
    <location>
        <position position="9"/>
    </location>
    <ligand>
        <name>L-glutamate</name>
        <dbReference type="ChEBI" id="CHEBI:29985"/>
    </ligand>
</feature>
<feature type="binding site" evidence="1">
    <location>
        <position position="42"/>
    </location>
    <ligand>
        <name>L-glutamate</name>
        <dbReference type="ChEBI" id="CHEBI:29985"/>
    </ligand>
</feature>
<feature type="binding site" evidence="1">
    <location>
        <begin position="76"/>
        <end position="77"/>
    </location>
    <ligand>
        <name>pyridoxal 5'-phosphate</name>
        <dbReference type="ChEBI" id="CHEBI:597326"/>
    </ligand>
</feature>
<feature type="binding site" evidence="1">
    <location>
        <position position="102"/>
    </location>
    <ligand>
        <name>pyridoxal 5'-phosphate</name>
        <dbReference type="ChEBI" id="CHEBI:597326"/>
    </ligand>
</feature>
<feature type="binding site" evidence="1">
    <location>
        <position position="153"/>
    </location>
    <ligand>
        <name>pyridoxal 5'-phosphate</name>
        <dbReference type="ChEBI" id="CHEBI:597326"/>
    </ligand>
</feature>
<feature type="binding site" evidence="1">
    <location>
        <position position="174"/>
    </location>
    <ligand>
        <name>pyridoxal 5'-phosphate</name>
        <dbReference type="ChEBI" id="CHEBI:597326"/>
    </ligand>
</feature>
<feature type="binding site" evidence="1">
    <location>
        <position position="197"/>
    </location>
    <ligand>
        <name>pyridoxal 5'-phosphate</name>
        <dbReference type="ChEBI" id="CHEBI:597326"/>
    </ligand>
</feature>
<feature type="binding site" evidence="1">
    <location>
        <begin position="239"/>
        <end position="240"/>
    </location>
    <ligand>
        <name>pyridoxal 5'-phosphate</name>
        <dbReference type="ChEBI" id="CHEBI:597326"/>
    </ligand>
</feature>
<feature type="modified residue" description="N6-(pyridoxal phosphate)lysine" evidence="1">
    <location>
        <position position="198"/>
    </location>
</feature>
<accession>Q32E24</accession>
<reference key="1">
    <citation type="journal article" date="2005" name="Nucleic Acids Res.">
        <title>Genome dynamics and diversity of Shigella species, the etiologic agents of bacillary dysentery.</title>
        <authorList>
            <person name="Yang F."/>
            <person name="Yang J."/>
            <person name="Zhang X."/>
            <person name="Chen L."/>
            <person name="Jiang Y."/>
            <person name="Yan Y."/>
            <person name="Tang X."/>
            <person name="Wang J."/>
            <person name="Xiong Z."/>
            <person name="Dong J."/>
            <person name="Xue Y."/>
            <person name="Zhu Y."/>
            <person name="Xu X."/>
            <person name="Sun L."/>
            <person name="Chen S."/>
            <person name="Nie H."/>
            <person name="Peng J."/>
            <person name="Xu J."/>
            <person name="Wang Y."/>
            <person name="Yuan Z."/>
            <person name="Wen Y."/>
            <person name="Yao Z."/>
            <person name="Shen Y."/>
            <person name="Qiang B."/>
            <person name="Hou Y."/>
            <person name="Yu J."/>
            <person name="Jin Q."/>
        </authorList>
    </citation>
    <scope>NUCLEOTIDE SEQUENCE [LARGE SCALE GENOMIC DNA]</scope>
    <source>
        <strain>Sd197</strain>
    </source>
</reference>